<protein>
    <recommendedName>
        <fullName>Sulfhydryl oxidase 2</fullName>
        <ecNumber>1.8.3.2</ecNumber>
    </recommendedName>
    <alternativeName>
        <fullName>Quiescin-sulfhydryl oxidase 2</fullName>
        <shortName>AtQSOX2</shortName>
    </alternativeName>
</protein>
<keyword id="KW-1015">Disulfide bond</keyword>
<keyword id="KW-0274">FAD</keyword>
<keyword id="KW-0285">Flavoprotein</keyword>
<keyword id="KW-0325">Glycoprotein</keyword>
<keyword id="KW-0560">Oxidoreductase</keyword>
<keyword id="KW-0676">Redox-active center</keyword>
<keyword id="KW-1185">Reference proteome</keyword>
<keyword id="KW-0964">Secreted</keyword>
<keyword id="KW-0732">Signal</keyword>
<reference key="1">
    <citation type="journal article" date="1999" name="Nature">
        <title>Sequence and analysis of chromosome 2 of the plant Arabidopsis thaliana.</title>
        <authorList>
            <person name="Lin X."/>
            <person name="Kaul S."/>
            <person name="Rounsley S.D."/>
            <person name="Shea T.P."/>
            <person name="Benito M.-I."/>
            <person name="Town C.D."/>
            <person name="Fujii C.Y."/>
            <person name="Mason T.M."/>
            <person name="Bowman C.L."/>
            <person name="Barnstead M.E."/>
            <person name="Feldblyum T.V."/>
            <person name="Buell C.R."/>
            <person name="Ketchum K.A."/>
            <person name="Lee J.J."/>
            <person name="Ronning C.M."/>
            <person name="Koo H.L."/>
            <person name="Moffat K.S."/>
            <person name="Cronin L.A."/>
            <person name="Shen M."/>
            <person name="Pai G."/>
            <person name="Van Aken S."/>
            <person name="Umayam L."/>
            <person name="Tallon L.J."/>
            <person name="Gill J.E."/>
            <person name="Adams M.D."/>
            <person name="Carrera A.J."/>
            <person name="Creasy T.H."/>
            <person name="Goodman H.M."/>
            <person name="Somerville C.R."/>
            <person name="Copenhaver G.P."/>
            <person name="Preuss D."/>
            <person name="Nierman W.C."/>
            <person name="White O."/>
            <person name="Eisen J.A."/>
            <person name="Salzberg S.L."/>
            <person name="Fraser C.M."/>
            <person name="Venter J.C."/>
        </authorList>
    </citation>
    <scope>NUCLEOTIDE SEQUENCE [LARGE SCALE GENOMIC DNA]</scope>
    <source>
        <strain>cv. Columbia</strain>
    </source>
</reference>
<reference key="2">
    <citation type="journal article" date="2017" name="Plant J.">
        <title>Araport11: a complete reannotation of the Arabidopsis thaliana reference genome.</title>
        <authorList>
            <person name="Cheng C.Y."/>
            <person name="Krishnakumar V."/>
            <person name="Chan A.P."/>
            <person name="Thibaud-Nissen F."/>
            <person name="Schobel S."/>
            <person name="Town C.D."/>
        </authorList>
    </citation>
    <scope>GENOME REANNOTATION</scope>
    <source>
        <strain>cv. Columbia</strain>
    </source>
</reference>
<reference key="3">
    <citation type="journal article" date="2003" name="Science">
        <title>Empirical analysis of transcriptional activity in the Arabidopsis genome.</title>
        <authorList>
            <person name="Yamada K."/>
            <person name="Lim J."/>
            <person name="Dale J.M."/>
            <person name="Chen H."/>
            <person name="Shinn P."/>
            <person name="Palm C.J."/>
            <person name="Southwick A.M."/>
            <person name="Wu H.C."/>
            <person name="Kim C.J."/>
            <person name="Nguyen M."/>
            <person name="Pham P.K."/>
            <person name="Cheuk R.F."/>
            <person name="Karlin-Newmann G."/>
            <person name="Liu S.X."/>
            <person name="Lam B."/>
            <person name="Sakano H."/>
            <person name="Wu T."/>
            <person name="Yu G."/>
            <person name="Miranda M."/>
            <person name="Quach H.L."/>
            <person name="Tripp M."/>
            <person name="Chang C.H."/>
            <person name="Lee J.M."/>
            <person name="Toriumi M.J."/>
            <person name="Chan M.M."/>
            <person name="Tang C.C."/>
            <person name="Onodera C.S."/>
            <person name="Deng J.M."/>
            <person name="Akiyama K."/>
            <person name="Ansari Y."/>
            <person name="Arakawa T."/>
            <person name="Banh J."/>
            <person name="Banno F."/>
            <person name="Bowser L."/>
            <person name="Brooks S.Y."/>
            <person name="Carninci P."/>
            <person name="Chao Q."/>
            <person name="Choy N."/>
            <person name="Enju A."/>
            <person name="Goldsmith A.D."/>
            <person name="Gurjal M."/>
            <person name="Hansen N.F."/>
            <person name="Hayashizaki Y."/>
            <person name="Johnson-Hopson C."/>
            <person name="Hsuan V.W."/>
            <person name="Iida K."/>
            <person name="Karnes M."/>
            <person name="Khan S."/>
            <person name="Koesema E."/>
            <person name="Ishida J."/>
            <person name="Jiang P.X."/>
            <person name="Jones T."/>
            <person name="Kawai J."/>
            <person name="Kamiya A."/>
            <person name="Meyers C."/>
            <person name="Nakajima M."/>
            <person name="Narusaka M."/>
            <person name="Seki M."/>
            <person name="Sakurai T."/>
            <person name="Satou M."/>
            <person name="Tamse R."/>
            <person name="Vaysberg M."/>
            <person name="Wallender E.K."/>
            <person name="Wong C."/>
            <person name="Yamamura Y."/>
            <person name="Yuan S."/>
            <person name="Shinozaki K."/>
            <person name="Davis R.W."/>
            <person name="Theologis A."/>
            <person name="Ecker J.R."/>
        </authorList>
    </citation>
    <scope>NUCLEOTIDE SEQUENCE [LARGE SCALE MRNA]</scope>
    <source>
        <strain>cv. Columbia</strain>
    </source>
</reference>
<proteinExistence type="evidence at transcript level"/>
<comment type="function">
    <text evidence="1">Catalyzes the oxidation of sulfhydryl groups in peptide and protein thiols to disulfides with the reduction of oxygen to hydrogen peroxide. May contribute to disulfide bond formation in a variety of secreted proteins (By similarity).</text>
</comment>
<comment type="catalytic activity">
    <reaction>
        <text>2 R'C(R)SH + O2 = R'C(R)S-S(R)CR' + H2O2</text>
        <dbReference type="Rhea" id="RHEA:17357"/>
        <dbReference type="ChEBI" id="CHEBI:15379"/>
        <dbReference type="ChEBI" id="CHEBI:16240"/>
        <dbReference type="ChEBI" id="CHEBI:16520"/>
        <dbReference type="ChEBI" id="CHEBI:17412"/>
        <dbReference type="EC" id="1.8.3.2"/>
    </reaction>
</comment>
<comment type="cofactor">
    <cofactor evidence="3">
        <name>FAD</name>
        <dbReference type="ChEBI" id="CHEBI:57692"/>
    </cofactor>
</comment>
<comment type="subcellular location">
    <subcellularLocation>
        <location evidence="1">Secreted</location>
    </subcellularLocation>
</comment>
<dbReference type="EC" id="1.8.3.2"/>
<dbReference type="EMBL" id="AC006200">
    <property type="protein sequence ID" value="AAD14527.2"/>
    <property type="molecule type" value="Genomic_DNA"/>
</dbReference>
<dbReference type="EMBL" id="CP002685">
    <property type="protein sequence ID" value="AEC05425.1"/>
    <property type="molecule type" value="Genomic_DNA"/>
</dbReference>
<dbReference type="EMBL" id="AY035175">
    <property type="protein sequence ID" value="AAK59679.1"/>
    <property type="molecule type" value="mRNA"/>
</dbReference>
<dbReference type="EMBL" id="AY090364">
    <property type="protein sequence ID" value="AAL91267.1"/>
    <property type="molecule type" value="mRNA"/>
</dbReference>
<dbReference type="EMBL" id="AY125539">
    <property type="protein sequence ID" value="AAM78049.1"/>
    <property type="molecule type" value="mRNA"/>
</dbReference>
<dbReference type="EMBL" id="BT000880">
    <property type="protein sequence ID" value="AAN41280.1"/>
    <property type="molecule type" value="mRNA"/>
</dbReference>
<dbReference type="PIR" id="F84422">
    <property type="entry name" value="F84422"/>
</dbReference>
<dbReference type="RefSeq" id="NP_565258.1">
    <property type="nucleotide sequence ID" value="NM_126188.4"/>
</dbReference>
<dbReference type="SMR" id="Q9ZU40"/>
<dbReference type="FunCoup" id="Q9ZU40">
    <property type="interactions" value="588"/>
</dbReference>
<dbReference type="STRING" id="3702.Q9ZU40"/>
<dbReference type="GlyCosmos" id="Q9ZU40">
    <property type="glycosylation" value="5 sites, No reported glycans"/>
</dbReference>
<dbReference type="GlyGen" id="Q9ZU40">
    <property type="glycosylation" value="5 sites"/>
</dbReference>
<dbReference type="SwissPalm" id="Q9ZU40"/>
<dbReference type="PaxDb" id="3702-AT2G01270.1"/>
<dbReference type="ProteomicsDB" id="226141"/>
<dbReference type="EnsemblPlants" id="AT2G01270.1">
    <property type="protein sequence ID" value="AT2G01270.1"/>
    <property type="gene ID" value="AT2G01270"/>
</dbReference>
<dbReference type="GeneID" id="814654"/>
<dbReference type="Gramene" id="AT2G01270.1">
    <property type="protein sequence ID" value="AT2G01270.1"/>
    <property type="gene ID" value="AT2G01270"/>
</dbReference>
<dbReference type="KEGG" id="ath:AT2G01270"/>
<dbReference type="Araport" id="AT2G01270"/>
<dbReference type="TAIR" id="AT2G01270">
    <property type="gene designation" value="QSOX2"/>
</dbReference>
<dbReference type="eggNOG" id="KOG1731">
    <property type="taxonomic scope" value="Eukaryota"/>
</dbReference>
<dbReference type="HOGENOM" id="CLU_041851_0_0_1"/>
<dbReference type="InParanoid" id="Q9ZU40"/>
<dbReference type="OMA" id="NEICDRE"/>
<dbReference type="PhylomeDB" id="Q9ZU40"/>
<dbReference type="BioCyc" id="ARA:AT2G01270-MONOMER"/>
<dbReference type="BRENDA" id="1.8.3.2">
    <property type="organism ID" value="399"/>
</dbReference>
<dbReference type="PRO" id="PR:Q9ZU40"/>
<dbReference type="Proteomes" id="UP000006548">
    <property type="component" value="Chromosome 2"/>
</dbReference>
<dbReference type="ExpressionAtlas" id="Q9ZU40">
    <property type="expression patterns" value="baseline and differential"/>
</dbReference>
<dbReference type="GO" id="GO:0005768">
    <property type="term" value="C:endosome"/>
    <property type="evidence" value="ECO:0007005"/>
    <property type="project" value="TAIR"/>
</dbReference>
<dbReference type="GO" id="GO:0005576">
    <property type="term" value="C:extracellular region"/>
    <property type="evidence" value="ECO:0007669"/>
    <property type="project" value="UniProtKB-SubCell"/>
</dbReference>
<dbReference type="GO" id="GO:0005794">
    <property type="term" value="C:Golgi apparatus"/>
    <property type="evidence" value="ECO:0007005"/>
    <property type="project" value="TAIR"/>
</dbReference>
<dbReference type="GO" id="GO:0000138">
    <property type="term" value="C:Golgi trans cisterna"/>
    <property type="evidence" value="ECO:0007005"/>
    <property type="project" value="TAIR"/>
</dbReference>
<dbReference type="GO" id="GO:0005802">
    <property type="term" value="C:trans-Golgi network"/>
    <property type="evidence" value="ECO:0007005"/>
    <property type="project" value="TAIR"/>
</dbReference>
<dbReference type="GO" id="GO:0016971">
    <property type="term" value="F:flavin-dependent sulfhydryl oxidase activity"/>
    <property type="evidence" value="ECO:0007669"/>
    <property type="project" value="InterPro"/>
</dbReference>
<dbReference type="FunFam" id="1.20.120.310:FF:000004">
    <property type="entry name" value="Sulfhydryl oxidase"/>
    <property type="match status" value="1"/>
</dbReference>
<dbReference type="FunFam" id="3.40.30.10:FF:000244">
    <property type="entry name" value="Sulfhydryl oxidase"/>
    <property type="match status" value="1"/>
</dbReference>
<dbReference type="Gene3D" id="1.20.120.310">
    <property type="entry name" value="ERV/ALR sulfhydryl oxidase domain"/>
    <property type="match status" value="1"/>
</dbReference>
<dbReference type="Gene3D" id="3.40.30.10">
    <property type="entry name" value="Glutaredoxin"/>
    <property type="match status" value="1"/>
</dbReference>
<dbReference type="InterPro" id="IPR036774">
    <property type="entry name" value="ERV/ALR_sulphydryl_oxid_sf"/>
</dbReference>
<dbReference type="InterPro" id="IPR017905">
    <property type="entry name" value="ERV/ALR_sulphydryl_oxidase"/>
</dbReference>
<dbReference type="InterPro" id="IPR039798">
    <property type="entry name" value="Sulfhydryl_oxidase"/>
</dbReference>
<dbReference type="InterPro" id="IPR036249">
    <property type="entry name" value="Thioredoxin-like_sf"/>
</dbReference>
<dbReference type="InterPro" id="IPR017937">
    <property type="entry name" value="Thioredoxin_CS"/>
</dbReference>
<dbReference type="InterPro" id="IPR013766">
    <property type="entry name" value="Thioredoxin_domain"/>
</dbReference>
<dbReference type="PANTHER" id="PTHR22897">
    <property type="entry name" value="QUIESCIN Q6-RELATED SULFHYDRYL OXIDASE"/>
    <property type="match status" value="1"/>
</dbReference>
<dbReference type="PANTHER" id="PTHR22897:SF8">
    <property type="entry name" value="SULFHYDRYL OXIDASE"/>
    <property type="match status" value="1"/>
</dbReference>
<dbReference type="Pfam" id="PF04777">
    <property type="entry name" value="Evr1_Alr"/>
    <property type="match status" value="1"/>
</dbReference>
<dbReference type="Pfam" id="PF00085">
    <property type="entry name" value="Thioredoxin"/>
    <property type="match status" value="1"/>
</dbReference>
<dbReference type="SUPFAM" id="SSF69000">
    <property type="entry name" value="FAD-dependent thiol oxidase"/>
    <property type="match status" value="1"/>
</dbReference>
<dbReference type="SUPFAM" id="SSF52833">
    <property type="entry name" value="Thioredoxin-like"/>
    <property type="match status" value="1"/>
</dbReference>
<dbReference type="PROSITE" id="PS51324">
    <property type="entry name" value="ERV_ALR"/>
    <property type="match status" value="1"/>
</dbReference>
<dbReference type="PROSITE" id="PS00194">
    <property type="entry name" value="THIOREDOXIN_1"/>
    <property type="match status" value="1"/>
</dbReference>
<dbReference type="PROSITE" id="PS51352">
    <property type="entry name" value="THIOREDOXIN_2"/>
    <property type="match status" value="1"/>
</dbReference>
<name>QSOX2_ARATH</name>
<sequence>MSLVHLLLFAGLVIAASSSSPGSRLILREISDQKDKAVELNTTNFDSVLKDTPAKYAVVEFFAHWCPACRNYKPHYEKVARLFNGPDAIHPGIVLMTRVDCAMKTNTKLCDKFSVSHYPMLFWGPPTKFVSGSWEPKKDKSEILVIDDGRTAERLLNWINKQIGSSYGLDDQKFKNEHALSNLTDYNQISQAVYDVEEATAEAFDIILAHKAIKSSETSASFIRFIQLLAAHHLSRRCRKGAAEILVNYDDLCPSGNCSYEKSGGNDTLGNFPICGKDVPRGYYMFCRGSKNDTRGFSCGLWVLMHSLSVRIEDGESHFAFTTICDFVNNFFMCDECRLHFNDMCLSVKTPFKKARDFVLWVWSTHNKVNERLLKDEASLGTGDPKFPKIIWPPKELCPLCYLSSNQKSIEWDHEHVYKFLKNYYGPKLVSLYKEKSVSRSKEETVSATEDLTVATNALVVPIGAALAIAIASCAFGALACYWRTQQKNRKPRRR</sequence>
<evidence type="ECO:0000250" key="1"/>
<evidence type="ECO:0000255" key="2"/>
<evidence type="ECO:0000255" key="3">
    <source>
        <dbReference type="PROSITE-ProRule" id="PRU00654"/>
    </source>
</evidence>
<evidence type="ECO:0000255" key="4">
    <source>
        <dbReference type="PROSITE-ProRule" id="PRU00691"/>
    </source>
</evidence>
<evidence type="ECO:0000305" key="5"/>
<feature type="signal peptide" evidence="2">
    <location>
        <begin position="1"/>
        <end position="15"/>
    </location>
</feature>
<feature type="chain" id="PRO_0000400051" description="Sulfhydryl oxidase 2">
    <location>
        <begin position="16"/>
        <end position="495"/>
    </location>
</feature>
<feature type="domain" description="Thioredoxin" evidence="4">
    <location>
        <begin position="29"/>
        <end position="164"/>
    </location>
</feature>
<feature type="domain" description="ERV/ALR sulfhydryl oxidase" evidence="3">
    <location>
        <begin position="290"/>
        <end position="392"/>
    </location>
</feature>
<feature type="active site" description="Nucleophile" evidence="1">
    <location>
        <position position="66"/>
    </location>
</feature>
<feature type="active site" description="Nucleophile" evidence="1">
    <location>
        <position position="69"/>
    </location>
</feature>
<feature type="binding site" evidence="1">
    <location>
        <position position="295"/>
    </location>
    <ligand>
        <name>FAD</name>
        <dbReference type="ChEBI" id="CHEBI:57692"/>
    </ligand>
</feature>
<feature type="binding site" evidence="1">
    <location>
        <position position="302"/>
    </location>
    <ligand>
        <name>FAD</name>
        <dbReference type="ChEBI" id="CHEBI:57692"/>
    </ligand>
</feature>
<feature type="binding site" evidence="1">
    <location>
        <position position="306"/>
    </location>
    <ligand>
        <name>FAD</name>
        <dbReference type="ChEBI" id="CHEBI:57692"/>
    </ligand>
</feature>
<feature type="binding site" evidence="1">
    <location>
        <position position="336"/>
    </location>
    <ligand>
        <name>FAD</name>
        <dbReference type="ChEBI" id="CHEBI:57692"/>
    </ligand>
</feature>
<feature type="binding site" evidence="1">
    <location>
        <position position="340"/>
    </location>
    <ligand>
        <name>FAD</name>
        <dbReference type="ChEBI" id="CHEBI:57692"/>
    </ligand>
</feature>
<feature type="binding site" evidence="1">
    <location>
        <begin position="363"/>
        <end position="370"/>
    </location>
    <ligand>
        <name>FAD</name>
        <dbReference type="ChEBI" id="CHEBI:57692"/>
    </ligand>
</feature>
<feature type="binding site" evidence="1">
    <location>
        <position position="389"/>
    </location>
    <ligand>
        <name>FAD</name>
        <dbReference type="ChEBI" id="CHEBI:57692"/>
    </ligand>
</feature>
<feature type="binding site" evidence="1">
    <location>
        <position position="392"/>
    </location>
    <ligand>
        <name>FAD</name>
        <dbReference type="ChEBI" id="CHEBI:57692"/>
    </ligand>
</feature>
<feature type="glycosylation site" description="N-linked (GlcNAc...) asparagine" evidence="2">
    <location>
        <position position="41"/>
    </location>
</feature>
<feature type="glycosylation site" description="N-linked (GlcNAc...) asparagine" evidence="2">
    <location>
        <position position="182"/>
    </location>
</feature>
<feature type="glycosylation site" description="N-linked (GlcNAc...) asparagine" evidence="2">
    <location>
        <position position="257"/>
    </location>
</feature>
<feature type="glycosylation site" description="N-linked (GlcNAc...) asparagine" evidence="2">
    <location>
        <position position="266"/>
    </location>
</feature>
<feature type="glycosylation site" description="N-linked (GlcNAc...) asparagine" evidence="2">
    <location>
        <position position="292"/>
    </location>
</feature>
<feature type="disulfide bond" description="Redox-active" evidence="3 4">
    <location>
        <begin position="66"/>
        <end position="69"/>
    </location>
</feature>
<feature type="disulfide bond" evidence="3">
    <location>
        <begin position="287"/>
        <end position="299"/>
    </location>
</feature>
<feature type="disulfide bond" evidence="3">
    <location>
        <begin position="334"/>
        <end position="337"/>
    </location>
</feature>
<feature type="disulfide bond" evidence="3">
    <location>
        <begin position="398"/>
        <end position="401"/>
    </location>
</feature>
<feature type="sequence conflict" description="In Ref. 3; AAK59679." evidence="5" ref="3">
    <original>G</original>
    <variation>D</variation>
    <location>
        <position position="85"/>
    </location>
</feature>
<accession>Q9ZU40</accession>
<accession>Q94C52</accession>
<organism>
    <name type="scientific">Arabidopsis thaliana</name>
    <name type="common">Mouse-ear cress</name>
    <dbReference type="NCBI Taxonomy" id="3702"/>
    <lineage>
        <taxon>Eukaryota</taxon>
        <taxon>Viridiplantae</taxon>
        <taxon>Streptophyta</taxon>
        <taxon>Embryophyta</taxon>
        <taxon>Tracheophyta</taxon>
        <taxon>Spermatophyta</taxon>
        <taxon>Magnoliopsida</taxon>
        <taxon>eudicotyledons</taxon>
        <taxon>Gunneridae</taxon>
        <taxon>Pentapetalae</taxon>
        <taxon>rosids</taxon>
        <taxon>malvids</taxon>
        <taxon>Brassicales</taxon>
        <taxon>Brassicaceae</taxon>
        <taxon>Camelineae</taxon>
        <taxon>Arabidopsis</taxon>
    </lineage>
</organism>
<gene>
    <name type="primary">QSOX2</name>
    <name type="ordered locus">At2g01270</name>
    <name type="ORF">F10A8.15</name>
</gene>